<keyword id="KW-0997">Cell inner membrane</keyword>
<keyword id="KW-1003">Cell membrane</keyword>
<keyword id="KW-0342">GTP-binding</keyword>
<keyword id="KW-0378">Hydrolase</keyword>
<keyword id="KW-0472">Membrane</keyword>
<keyword id="KW-0547">Nucleotide-binding</keyword>
<keyword id="KW-0648">Protein biosynthesis</keyword>
<keyword id="KW-1185">Reference proteome</keyword>
<dbReference type="EC" id="3.6.5.n1" evidence="1"/>
<dbReference type="EMBL" id="AE017340">
    <property type="protein sequence ID" value="AAV81652.1"/>
    <property type="molecule type" value="Genomic_DNA"/>
</dbReference>
<dbReference type="RefSeq" id="WP_011234063.1">
    <property type="nucleotide sequence ID" value="NC_006512.1"/>
</dbReference>
<dbReference type="SMR" id="Q5R104"/>
<dbReference type="STRING" id="283942.IL0812"/>
<dbReference type="GeneID" id="41335967"/>
<dbReference type="KEGG" id="ilo:IL0812"/>
<dbReference type="eggNOG" id="COG0481">
    <property type="taxonomic scope" value="Bacteria"/>
</dbReference>
<dbReference type="HOGENOM" id="CLU_009995_3_3_6"/>
<dbReference type="OrthoDB" id="9804431at2"/>
<dbReference type="Proteomes" id="UP000001171">
    <property type="component" value="Chromosome"/>
</dbReference>
<dbReference type="GO" id="GO:0005886">
    <property type="term" value="C:plasma membrane"/>
    <property type="evidence" value="ECO:0007669"/>
    <property type="project" value="UniProtKB-SubCell"/>
</dbReference>
<dbReference type="GO" id="GO:0005525">
    <property type="term" value="F:GTP binding"/>
    <property type="evidence" value="ECO:0007669"/>
    <property type="project" value="UniProtKB-UniRule"/>
</dbReference>
<dbReference type="GO" id="GO:0003924">
    <property type="term" value="F:GTPase activity"/>
    <property type="evidence" value="ECO:0007669"/>
    <property type="project" value="UniProtKB-UniRule"/>
</dbReference>
<dbReference type="GO" id="GO:0097216">
    <property type="term" value="F:guanosine tetraphosphate binding"/>
    <property type="evidence" value="ECO:0007669"/>
    <property type="project" value="UniProtKB-ARBA"/>
</dbReference>
<dbReference type="GO" id="GO:0043022">
    <property type="term" value="F:ribosome binding"/>
    <property type="evidence" value="ECO:0007669"/>
    <property type="project" value="UniProtKB-UniRule"/>
</dbReference>
<dbReference type="GO" id="GO:0003746">
    <property type="term" value="F:translation elongation factor activity"/>
    <property type="evidence" value="ECO:0007669"/>
    <property type="project" value="UniProtKB-UniRule"/>
</dbReference>
<dbReference type="GO" id="GO:0045727">
    <property type="term" value="P:positive regulation of translation"/>
    <property type="evidence" value="ECO:0007669"/>
    <property type="project" value="UniProtKB-UniRule"/>
</dbReference>
<dbReference type="CDD" id="cd03699">
    <property type="entry name" value="EF4_II"/>
    <property type="match status" value="1"/>
</dbReference>
<dbReference type="CDD" id="cd16260">
    <property type="entry name" value="EF4_III"/>
    <property type="match status" value="1"/>
</dbReference>
<dbReference type="CDD" id="cd01890">
    <property type="entry name" value="LepA"/>
    <property type="match status" value="1"/>
</dbReference>
<dbReference type="CDD" id="cd03709">
    <property type="entry name" value="lepA_C"/>
    <property type="match status" value="1"/>
</dbReference>
<dbReference type="FunFam" id="3.40.50.300:FF:000078">
    <property type="entry name" value="Elongation factor 4"/>
    <property type="match status" value="1"/>
</dbReference>
<dbReference type="FunFam" id="2.40.30.10:FF:000015">
    <property type="entry name" value="Translation factor GUF1, mitochondrial"/>
    <property type="match status" value="1"/>
</dbReference>
<dbReference type="FunFam" id="3.30.70.240:FF:000007">
    <property type="entry name" value="Translation factor GUF1, mitochondrial"/>
    <property type="match status" value="1"/>
</dbReference>
<dbReference type="FunFam" id="3.30.70.2570:FF:000001">
    <property type="entry name" value="Translation factor GUF1, mitochondrial"/>
    <property type="match status" value="1"/>
</dbReference>
<dbReference type="FunFam" id="3.30.70.870:FF:000004">
    <property type="entry name" value="Translation factor GUF1, mitochondrial"/>
    <property type="match status" value="1"/>
</dbReference>
<dbReference type="Gene3D" id="3.30.70.240">
    <property type="match status" value="1"/>
</dbReference>
<dbReference type="Gene3D" id="3.30.70.2570">
    <property type="entry name" value="Elongation factor 4, C-terminal domain"/>
    <property type="match status" value="1"/>
</dbReference>
<dbReference type="Gene3D" id="3.30.70.870">
    <property type="entry name" value="Elongation Factor G (Translational Gtpase), domain 3"/>
    <property type="match status" value="1"/>
</dbReference>
<dbReference type="Gene3D" id="3.40.50.300">
    <property type="entry name" value="P-loop containing nucleotide triphosphate hydrolases"/>
    <property type="match status" value="1"/>
</dbReference>
<dbReference type="Gene3D" id="2.40.30.10">
    <property type="entry name" value="Translation factors"/>
    <property type="match status" value="1"/>
</dbReference>
<dbReference type="HAMAP" id="MF_00071">
    <property type="entry name" value="LepA"/>
    <property type="match status" value="1"/>
</dbReference>
<dbReference type="InterPro" id="IPR006297">
    <property type="entry name" value="EF-4"/>
</dbReference>
<dbReference type="InterPro" id="IPR035647">
    <property type="entry name" value="EFG_III/V"/>
</dbReference>
<dbReference type="InterPro" id="IPR000640">
    <property type="entry name" value="EFG_V-like"/>
</dbReference>
<dbReference type="InterPro" id="IPR031157">
    <property type="entry name" value="G_TR_CS"/>
</dbReference>
<dbReference type="InterPro" id="IPR038363">
    <property type="entry name" value="LepA_C_sf"/>
</dbReference>
<dbReference type="InterPro" id="IPR013842">
    <property type="entry name" value="LepA_CTD"/>
</dbReference>
<dbReference type="InterPro" id="IPR035654">
    <property type="entry name" value="LepA_IV"/>
</dbReference>
<dbReference type="InterPro" id="IPR027417">
    <property type="entry name" value="P-loop_NTPase"/>
</dbReference>
<dbReference type="InterPro" id="IPR005225">
    <property type="entry name" value="Small_GTP-bd"/>
</dbReference>
<dbReference type="InterPro" id="IPR000795">
    <property type="entry name" value="T_Tr_GTP-bd_dom"/>
</dbReference>
<dbReference type="NCBIfam" id="TIGR01393">
    <property type="entry name" value="lepA"/>
    <property type="match status" value="1"/>
</dbReference>
<dbReference type="NCBIfam" id="TIGR00231">
    <property type="entry name" value="small_GTP"/>
    <property type="match status" value="1"/>
</dbReference>
<dbReference type="PANTHER" id="PTHR43512:SF4">
    <property type="entry name" value="TRANSLATION FACTOR GUF1 HOMOLOG, CHLOROPLASTIC"/>
    <property type="match status" value="1"/>
</dbReference>
<dbReference type="PANTHER" id="PTHR43512">
    <property type="entry name" value="TRANSLATION FACTOR GUF1-RELATED"/>
    <property type="match status" value="1"/>
</dbReference>
<dbReference type="Pfam" id="PF00679">
    <property type="entry name" value="EFG_C"/>
    <property type="match status" value="1"/>
</dbReference>
<dbReference type="Pfam" id="PF00009">
    <property type="entry name" value="GTP_EFTU"/>
    <property type="match status" value="1"/>
</dbReference>
<dbReference type="Pfam" id="PF06421">
    <property type="entry name" value="LepA_C"/>
    <property type="match status" value="1"/>
</dbReference>
<dbReference type="PRINTS" id="PR00315">
    <property type="entry name" value="ELONGATNFCT"/>
</dbReference>
<dbReference type="SMART" id="SM00838">
    <property type="entry name" value="EFG_C"/>
    <property type="match status" value="1"/>
</dbReference>
<dbReference type="SUPFAM" id="SSF54980">
    <property type="entry name" value="EF-G C-terminal domain-like"/>
    <property type="match status" value="2"/>
</dbReference>
<dbReference type="SUPFAM" id="SSF52540">
    <property type="entry name" value="P-loop containing nucleoside triphosphate hydrolases"/>
    <property type="match status" value="1"/>
</dbReference>
<dbReference type="PROSITE" id="PS00301">
    <property type="entry name" value="G_TR_1"/>
    <property type="match status" value="1"/>
</dbReference>
<dbReference type="PROSITE" id="PS51722">
    <property type="entry name" value="G_TR_2"/>
    <property type="match status" value="1"/>
</dbReference>
<reference key="1">
    <citation type="journal article" date="2004" name="Proc. Natl. Acad. Sci. U.S.A.">
        <title>Genome sequence of the deep-sea gamma-proteobacterium Idiomarina loihiensis reveals amino acid fermentation as a source of carbon and energy.</title>
        <authorList>
            <person name="Hou S."/>
            <person name="Saw J.H."/>
            <person name="Lee K.S."/>
            <person name="Freitas T.A."/>
            <person name="Belisle C."/>
            <person name="Kawarabayasi Y."/>
            <person name="Donachie S.P."/>
            <person name="Pikina A."/>
            <person name="Galperin M.Y."/>
            <person name="Koonin E.V."/>
            <person name="Makarova K.S."/>
            <person name="Omelchenko M.V."/>
            <person name="Sorokin A."/>
            <person name="Wolf Y.I."/>
            <person name="Li Q.X."/>
            <person name="Keum Y.S."/>
            <person name="Campbell S."/>
            <person name="Denery J."/>
            <person name="Aizawa S."/>
            <person name="Shibata S."/>
            <person name="Malahoff A."/>
            <person name="Alam M."/>
        </authorList>
    </citation>
    <scope>NUCLEOTIDE SEQUENCE [LARGE SCALE GENOMIC DNA]</scope>
    <source>
        <strain>ATCC BAA-735 / DSM 15497 / L2-TR</strain>
    </source>
</reference>
<organism>
    <name type="scientific">Idiomarina loihiensis (strain ATCC BAA-735 / DSM 15497 / L2-TR)</name>
    <dbReference type="NCBI Taxonomy" id="283942"/>
    <lineage>
        <taxon>Bacteria</taxon>
        <taxon>Pseudomonadati</taxon>
        <taxon>Pseudomonadota</taxon>
        <taxon>Gammaproteobacteria</taxon>
        <taxon>Alteromonadales</taxon>
        <taxon>Idiomarinaceae</taxon>
        <taxon>Idiomarina</taxon>
    </lineage>
</organism>
<comment type="function">
    <text evidence="1">Required for accurate and efficient protein synthesis under certain stress conditions. May act as a fidelity factor of the translation reaction, by catalyzing a one-codon backward translocation of tRNAs on improperly translocated ribosomes. Back-translocation proceeds from a post-translocation (POST) complex to a pre-translocation (PRE) complex, thus giving elongation factor G a second chance to translocate the tRNAs correctly. Binds to ribosomes in a GTP-dependent manner.</text>
</comment>
<comment type="catalytic activity">
    <reaction evidence="1">
        <text>GTP + H2O = GDP + phosphate + H(+)</text>
        <dbReference type="Rhea" id="RHEA:19669"/>
        <dbReference type="ChEBI" id="CHEBI:15377"/>
        <dbReference type="ChEBI" id="CHEBI:15378"/>
        <dbReference type="ChEBI" id="CHEBI:37565"/>
        <dbReference type="ChEBI" id="CHEBI:43474"/>
        <dbReference type="ChEBI" id="CHEBI:58189"/>
        <dbReference type="EC" id="3.6.5.n1"/>
    </reaction>
</comment>
<comment type="subcellular location">
    <subcellularLocation>
        <location evidence="1">Cell inner membrane</location>
        <topology evidence="1">Peripheral membrane protein</topology>
        <orientation evidence="1">Cytoplasmic side</orientation>
    </subcellularLocation>
</comment>
<comment type="similarity">
    <text evidence="1">Belongs to the TRAFAC class translation factor GTPase superfamily. Classic translation factor GTPase family. LepA subfamily.</text>
</comment>
<name>LEPA_IDILO</name>
<evidence type="ECO:0000255" key="1">
    <source>
        <dbReference type="HAMAP-Rule" id="MF_00071"/>
    </source>
</evidence>
<feature type="chain" id="PRO_0000224766" description="Elongation factor 4">
    <location>
        <begin position="1"/>
        <end position="603"/>
    </location>
</feature>
<feature type="domain" description="tr-type G">
    <location>
        <begin position="9"/>
        <end position="191"/>
    </location>
</feature>
<feature type="binding site" evidence="1">
    <location>
        <begin position="21"/>
        <end position="26"/>
    </location>
    <ligand>
        <name>GTP</name>
        <dbReference type="ChEBI" id="CHEBI:37565"/>
    </ligand>
</feature>
<feature type="binding site" evidence="1">
    <location>
        <begin position="138"/>
        <end position="141"/>
    </location>
    <ligand>
        <name>GTP</name>
        <dbReference type="ChEBI" id="CHEBI:37565"/>
    </ligand>
</feature>
<protein>
    <recommendedName>
        <fullName evidence="1">Elongation factor 4</fullName>
        <shortName evidence="1">EF-4</shortName>
        <ecNumber evidence="1">3.6.5.n1</ecNumber>
    </recommendedName>
    <alternativeName>
        <fullName evidence="1">Ribosomal back-translocase LepA</fullName>
    </alternativeName>
</protein>
<accession>Q5R104</accession>
<gene>
    <name evidence="1" type="primary">lepA</name>
    <name type="ordered locus">IL0812</name>
</gene>
<sequence length="603" mass="66813">MPNRAFKQSNIRNFSIIAHIDHGKSTLSDRLIQHCGGLTDREMAEQVLDSMDLERERGITIKAQSVTLYYTAKDGETYQLNFIDTPGHVDFSYEVSRSLAGCEGALLVVDAAQGVEAQTLANCYTAIEMDLEVVPVLNKIDLPQADAMGVAQEIEDIVGIEAVDAVQCSAKTGLGIDDVLERIVRQIPPPKGEPEEPLQALIIDSWFDNYQGVVSLVRVRNGTLRAGEKMTVMSTGQSYQIDKVGYFDPKPHETGILHTGEVGYVISGIKDILGAPVGDTLTNTKSPAKEPVPGFKKVKPQVYAGMFPISSEDYESFRDALGKLSLNDASLFYEPENSAALGFGFRCGFLGMLHMEIIQERLEREYDIDLITTAPTVVYEVEKTDGSIVKVDNPVNLPAVNDIETIYEPIVEANILVPQEFLGNVITLCVDKRGVQTAMAYHGKQVAVTYELPMAEVVMDFFDRLKSTSRGYASLDYQFKKFEPADMVRVDILINGDRVDALAMITHRDHAEGRGRMLVDKMRELIPRQMFDIAIQATIGNHVIARSTVKQLRKNVTAKCYGGDISRKKKLLQKQKEGKKRMKNLGNVEVPQEAFLAVLKVGK</sequence>
<proteinExistence type="inferred from homology"/>